<keyword id="KW-0963">Cytoplasm</keyword>
<keyword id="KW-0227">DNA damage</keyword>
<keyword id="KW-0233">DNA recombination</keyword>
<keyword id="KW-0234">DNA repair</keyword>
<keyword id="KW-0238">DNA-binding</keyword>
<keyword id="KW-0255">Endonuclease</keyword>
<keyword id="KW-0378">Hydrolase</keyword>
<keyword id="KW-0460">Magnesium</keyword>
<keyword id="KW-0479">Metal-binding</keyword>
<keyword id="KW-0540">Nuclease</keyword>
<keyword id="KW-1185">Reference proteome</keyword>
<evidence type="ECO:0000255" key="1">
    <source>
        <dbReference type="HAMAP-Rule" id="MF_00034"/>
    </source>
</evidence>
<sequence>MRILGIDPGIARVGYGVIDTSNGQQQMLDCGIIRTNPGIDDGERMVEIASDLRQLIRRWKPQLAAVEKFFFYRSSTTISVVQARGVIIMTLARFRVPVMEFPPMQIKLALAGSGHAEKDEVLDAVMRELNLDQPPRPDDAADALAIALTGWFQR</sequence>
<name>RUVC_PROMM</name>
<feature type="chain" id="PRO_0000183119" description="Crossover junction endodeoxyribonuclease RuvC">
    <location>
        <begin position="1"/>
        <end position="154"/>
    </location>
</feature>
<feature type="active site" evidence="1">
    <location>
        <position position="7"/>
    </location>
</feature>
<feature type="active site" evidence="1">
    <location>
        <position position="67"/>
    </location>
</feature>
<feature type="active site" evidence="1">
    <location>
        <position position="139"/>
    </location>
</feature>
<feature type="binding site" evidence="1">
    <location>
        <position position="7"/>
    </location>
    <ligand>
        <name>Mg(2+)</name>
        <dbReference type="ChEBI" id="CHEBI:18420"/>
        <label>1</label>
    </ligand>
</feature>
<feature type="binding site" evidence="1">
    <location>
        <position position="67"/>
    </location>
    <ligand>
        <name>Mg(2+)</name>
        <dbReference type="ChEBI" id="CHEBI:18420"/>
        <label>2</label>
    </ligand>
</feature>
<feature type="binding site" evidence="1">
    <location>
        <position position="139"/>
    </location>
    <ligand>
        <name>Mg(2+)</name>
        <dbReference type="ChEBI" id="CHEBI:18420"/>
        <label>1</label>
    </ligand>
</feature>
<organism>
    <name type="scientific">Prochlorococcus marinus (strain MIT 9313)</name>
    <dbReference type="NCBI Taxonomy" id="74547"/>
    <lineage>
        <taxon>Bacteria</taxon>
        <taxon>Bacillati</taxon>
        <taxon>Cyanobacteriota</taxon>
        <taxon>Cyanophyceae</taxon>
        <taxon>Synechococcales</taxon>
        <taxon>Prochlorococcaceae</taxon>
        <taxon>Prochlorococcus</taxon>
    </lineage>
</organism>
<reference key="1">
    <citation type="journal article" date="2003" name="Nature">
        <title>Genome divergence in two Prochlorococcus ecotypes reflects oceanic niche differentiation.</title>
        <authorList>
            <person name="Rocap G."/>
            <person name="Larimer F.W."/>
            <person name="Lamerdin J.E."/>
            <person name="Malfatti S."/>
            <person name="Chain P."/>
            <person name="Ahlgren N.A."/>
            <person name="Arellano A."/>
            <person name="Coleman M."/>
            <person name="Hauser L."/>
            <person name="Hess W.R."/>
            <person name="Johnson Z.I."/>
            <person name="Land M.L."/>
            <person name="Lindell D."/>
            <person name="Post A.F."/>
            <person name="Regala W."/>
            <person name="Shah M."/>
            <person name="Shaw S.L."/>
            <person name="Steglich C."/>
            <person name="Sullivan M.B."/>
            <person name="Ting C.S."/>
            <person name="Tolonen A."/>
            <person name="Webb E.A."/>
            <person name="Zinser E.R."/>
            <person name="Chisholm S.W."/>
        </authorList>
    </citation>
    <scope>NUCLEOTIDE SEQUENCE [LARGE SCALE GENOMIC DNA]</scope>
    <source>
        <strain>MIT 9313</strain>
    </source>
</reference>
<proteinExistence type="inferred from homology"/>
<protein>
    <recommendedName>
        <fullName evidence="1">Crossover junction endodeoxyribonuclease RuvC</fullName>
        <ecNumber evidence="1">3.1.21.10</ecNumber>
    </recommendedName>
    <alternativeName>
        <fullName evidence="1">Holliday junction nuclease RuvC</fullName>
    </alternativeName>
    <alternativeName>
        <fullName evidence="1">Holliday junction resolvase RuvC</fullName>
    </alternativeName>
</protein>
<dbReference type="EC" id="3.1.21.10" evidence="1"/>
<dbReference type="EMBL" id="BX548175">
    <property type="protein sequence ID" value="CAE21311.1"/>
    <property type="molecule type" value="Genomic_DNA"/>
</dbReference>
<dbReference type="RefSeq" id="WP_011130508.1">
    <property type="nucleotide sequence ID" value="NC_005071.1"/>
</dbReference>
<dbReference type="SMR" id="Q7V6L9"/>
<dbReference type="KEGG" id="pmt:PMT_1136"/>
<dbReference type="eggNOG" id="COG0817">
    <property type="taxonomic scope" value="Bacteria"/>
</dbReference>
<dbReference type="HOGENOM" id="CLU_091257_3_1_3"/>
<dbReference type="OrthoDB" id="9805499at2"/>
<dbReference type="Proteomes" id="UP000001423">
    <property type="component" value="Chromosome"/>
</dbReference>
<dbReference type="GO" id="GO:0005737">
    <property type="term" value="C:cytoplasm"/>
    <property type="evidence" value="ECO:0007669"/>
    <property type="project" value="UniProtKB-SubCell"/>
</dbReference>
<dbReference type="GO" id="GO:0048476">
    <property type="term" value="C:Holliday junction resolvase complex"/>
    <property type="evidence" value="ECO:0007669"/>
    <property type="project" value="UniProtKB-UniRule"/>
</dbReference>
<dbReference type="GO" id="GO:0008821">
    <property type="term" value="F:crossover junction DNA endonuclease activity"/>
    <property type="evidence" value="ECO:0007669"/>
    <property type="project" value="UniProtKB-UniRule"/>
</dbReference>
<dbReference type="GO" id="GO:0003677">
    <property type="term" value="F:DNA binding"/>
    <property type="evidence" value="ECO:0007669"/>
    <property type="project" value="UniProtKB-KW"/>
</dbReference>
<dbReference type="GO" id="GO:0000287">
    <property type="term" value="F:magnesium ion binding"/>
    <property type="evidence" value="ECO:0007669"/>
    <property type="project" value="UniProtKB-UniRule"/>
</dbReference>
<dbReference type="GO" id="GO:0006310">
    <property type="term" value="P:DNA recombination"/>
    <property type="evidence" value="ECO:0007669"/>
    <property type="project" value="UniProtKB-UniRule"/>
</dbReference>
<dbReference type="GO" id="GO:0006281">
    <property type="term" value="P:DNA repair"/>
    <property type="evidence" value="ECO:0007669"/>
    <property type="project" value="UniProtKB-UniRule"/>
</dbReference>
<dbReference type="CDD" id="cd16962">
    <property type="entry name" value="RuvC"/>
    <property type="match status" value="1"/>
</dbReference>
<dbReference type="FunFam" id="3.30.420.10:FF:000002">
    <property type="entry name" value="Crossover junction endodeoxyribonuclease RuvC"/>
    <property type="match status" value="1"/>
</dbReference>
<dbReference type="Gene3D" id="3.30.420.10">
    <property type="entry name" value="Ribonuclease H-like superfamily/Ribonuclease H"/>
    <property type="match status" value="1"/>
</dbReference>
<dbReference type="HAMAP" id="MF_00034">
    <property type="entry name" value="RuvC"/>
    <property type="match status" value="1"/>
</dbReference>
<dbReference type="InterPro" id="IPR012337">
    <property type="entry name" value="RNaseH-like_sf"/>
</dbReference>
<dbReference type="InterPro" id="IPR036397">
    <property type="entry name" value="RNaseH_sf"/>
</dbReference>
<dbReference type="InterPro" id="IPR020563">
    <property type="entry name" value="X-over_junc_endoDNase_Mg_BS"/>
</dbReference>
<dbReference type="InterPro" id="IPR002176">
    <property type="entry name" value="X-over_junc_endoDNase_RuvC"/>
</dbReference>
<dbReference type="NCBIfam" id="NF000711">
    <property type="entry name" value="PRK00039.2-1"/>
    <property type="match status" value="1"/>
</dbReference>
<dbReference type="PANTHER" id="PTHR30194">
    <property type="entry name" value="CROSSOVER JUNCTION ENDODEOXYRIBONUCLEASE RUVC"/>
    <property type="match status" value="1"/>
</dbReference>
<dbReference type="PANTHER" id="PTHR30194:SF3">
    <property type="entry name" value="CROSSOVER JUNCTION ENDODEOXYRIBONUCLEASE RUVC"/>
    <property type="match status" value="1"/>
</dbReference>
<dbReference type="Pfam" id="PF02075">
    <property type="entry name" value="RuvC"/>
    <property type="match status" value="1"/>
</dbReference>
<dbReference type="PRINTS" id="PR00696">
    <property type="entry name" value="RSOLVASERUVC"/>
</dbReference>
<dbReference type="SUPFAM" id="SSF53098">
    <property type="entry name" value="Ribonuclease H-like"/>
    <property type="match status" value="1"/>
</dbReference>
<dbReference type="PROSITE" id="PS01321">
    <property type="entry name" value="RUVC"/>
    <property type="match status" value="1"/>
</dbReference>
<accession>Q7V6L9</accession>
<gene>
    <name evidence="1" type="primary">ruvC</name>
    <name type="ordered locus">PMT_1136</name>
</gene>
<comment type="function">
    <text evidence="1">The RuvA-RuvB-RuvC complex processes Holliday junction (HJ) DNA during genetic recombination and DNA repair. Endonuclease that resolves HJ intermediates. Cleaves cruciform DNA by making single-stranded nicks across the HJ at symmetrical positions within the homologous arms, yielding a 5'-phosphate and a 3'-hydroxyl group; requires a central core of homology in the junction. The consensus cleavage sequence is 5'-(A/T)TT(C/G)-3'. Cleavage occurs on the 3'-side of the TT dinucleotide at the point of strand exchange. HJ branch migration catalyzed by RuvA-RuvB allows RuvC to scan DNA until it finds its consensus sequence, where it cleaves and resolves the cruciform DNA.</text>
</comment>
<comment type="catalytic activity">
    <reaction evidence="1">
        <text>Endonucleolytic cleavage at a junction such as a reciprocal single-stranded crossover between two homologous DNA duplexes (Holliday junction).</text>
        <dbReference type="EC" id="3.1.21.10"/>
    </reaction>
</comment>
<comment type="cofactor">
    <cofactor evidence="1">
        <name>Mg(2+)</name>
        <dbReference type="ChEBI" id="CHEBI:18420"/>
    </cofactor>
    <text evidence="1">Binds 2 Mg(2+) ion per subunit.</text>
</comment>
<comment type="subunit">
    <text evidence="1">Homodimer which binds Holliday junction (HJ) DNA. The HJ becomes 2-fold symmetrical on binding to RuvC with unstacked arms; it has a different conformation from HJ DNA in complex with RuvA. In the full resolvosome a probable DNA-RuvA(4)-RuvB(12)-RuvC(2) complex forms which resolves the HJ.</text>
</comment>
<comment type="subcellular location">
    <subcellularLocation>
        <location evidence="1">Cytoplasm</location>
    </subcellularLocation>
</comment>
<comment type="similarity">
    <text evidence="1">Belongs to the RuvC family.</text>
</comment>